<proteinExistence type="inferred from homology"/>
<sequence>MAKNIQAIRGMNDYLPGETAIWQRIEGTLKNVLGSYGYSEIRLPIVEQTPLFKRAIGEVTDVVEKEMYTFEDRNGDSLTLRPEGTAGCVRAGIEHGLLYNQEQRLWYIGPMFRHERPQKGRYRQFHQLGCEVFGLQGPDIDAELIMLTARWWRALGISEHVTLELNSIGSLEARANYRDALVAFLEQHKEKLDEDCKRRMYTNPLRVLDSKNPEVQALLNDAPALGDYLDEESREHFAGLCKLLESAGIAYTVNQRLVRGLDYYNRTVFEWVTNSLGSQGTVCAGGRYDGLVEQLGGRATPAVGFAMGLERLVLLVQAVNPEFKADPVVDIYLVASGADTQSAAMALAERLRDELPGVKLMTNHGGGNFKKQFARADKWGARVAVVLGESEVANGTAVVKDLRSGEQTAVAQDSVAAHLRTLLG</sequence>
<comment type="catalytic activity">
    <reaction evidence="1">
        <text>tRNA(His) + L-histidine + ATP = L-histidyl-tRNA(His) + AMP + diphosphate + H(+)</text>
        <dbReference type="Rhea" id="RHEA:17313"/>
        <dbReference type="Rhea" id="RHEA-COMP:9665"/>
        <dbReference type="Rhea" id="RHEA-COMP:9689"/>
        <dbReference type="ChEBI" id="CHEBI:15378"/>
        <dbReference type="ChEBI" id="CHEBI:30616"/>
        <dbReference type="ChEBI" id="CHEBI:33019"/>
        <dbReference type="ChEBI" id="CHEBI:57595"/>
        <dbReference type="ChEBI" id="CHEBI:78442"/>
        <dbReference type="ChEBI" id="CHEBI:78527"/>
        <dbReference type="ChEBI" id="CHEBI:456215"/>
        <dbReference type="EC" id="6.1.1.21"/>
    </reaction>
</comment>
<comment type="subunit">
    <text evidence="1">Homodimer.</text>
</comment>
<comment type="subcellular location">
    <subcellularLocation>
        <location evidence="1">Cytoplasm</location>
    </subcellularLocation>
</comment>
<comment type="similarity">
    <text evidence="1">Belongs to the class-II aminoacyl-tRNA synthetase family.</text>
</comment>
<gene>
    <name evidence="1" type="primary">hisS</name>
    <name type="ordered locus">ECP_2519</name>
</gene>
<evidence type="ECO:0000255" key="1">
    <source>
        <dbReference type="HAMAP-Rule" id="MF_00127"/>
    </source>
</evidence>
<organism>
    <name type="scientific">Escherichia coli O6:K15:H31 (strain 536 / UPEC)</name>
    <dbReference type="NCBI Taxonomy" id="362663"/>
    <lineage>
        <taxon>Bacteria</taxon>
        <taxon>Pseudomonadati</taxon>
        <taxon>Pseudomonadota</taxon>
        <taxon>Gammaproteobacteria</taxon>
        <taxon>Enterobacterales</taxon>
        <taxon>Enterobacteriaceae</taxon>
        <taxon>Escherichia</taxon>
    </lineage>
</organism>
<accession>Q0TEX1</accession>
<name>SYH_ECOL5</name>
<keyword id="KW-0030">Aminoacyl-tRNA synthetase</keyword>
<keyword id="KW-0067">ATP-binding</keyword>
<keyword id="KW-0963">Cytoplasm</keyword>
<keyword id="KW-0436">Ligase</keyword>
<keyword id="KW-0547">Nucleotide-binding</keyword>
<keyword id="KW-0648">Protein biosynthesis</keyword>
<reference key="1">
    <citation type="journal article" date="2006" name="Mol. Microbiol.">
        <title>Role of pathogenicity island-associated integrases in the genome plasticity of uropathogenic Escherichia coli strain 536.</title>
        <authorList>
            <person name="Hochhut B."/>
            <person name="Wilde C."/>
            <person name="Balling G."/>
            <person name="Middendorf B."/>
            <person name="Dobrindt U."/>
            <person name="Brzuszkiewicz E."/>
            <person name="Gottschalk G."/>
            <person name="Carniel E."/>
            <person name="Hacker J."/>
        </authorList>
    </citation>
    <scope>NUCLEOTIDE SEQUENCE [LARGE SCALE GENOMIC DNA]</scope>
    <source>
        <strain>536 / UPEC</strain>
    </source>
</reference>
<feature type="chain" id="PRO_1000016356" description="Histidine--tRNA ligase">
    <location>
        <begin position="1"/>
        <end position="424"/>
    </location>
</feature>
<protein>
    <recommendedName>
        <fullName evidence="1">Histidine--tRNA ligase</fullName>
        <ecNumber evidence="1">6.1.1.21</ecNumber>
    </recommendedName>
    <alternativeName>
        <fullName evidence="1">Histidyl-tRNA synthetase</fullName>
        <shortName evidence="1">HisRS</shortName>
    </alternativeName>
</protein>
<dbReference type="EC" id="6.1.1.21" evidence="1"/>
<dbReference type="EMBL" id="CP000247">
    <property type="protein sequence ID" value="ABG70508.1"/>
    <property type="molecule type" value="Genomic_DNA"/>
</dbReference>
<dbReference type="RefSeq" id="WP_001107167.1">
    <property type="nucleotide sequence ID" value="NC_008253.1"/>
</dbReference>
<dbReference type="SMR" id="Q0TEX1"/>
<dbReference type="GeneID" id="75206207"/>
<dbReference type="KEGG" id="ecp:ECP_2519"/>
<dbReference type="HOGENOM" id="CLU_025113_1_1_6"/>
<dbReference type="Proteomes" id="UP000009182">
    <property type="component" value="Chromosome"/>
</dbReference>
<dbReference type="GO" id="GO:0005737">
    <property type="term" value="C:cytoplasm"/>
    <property type="evidence" value="ECO:0007669"/>
    <property type="project" value="UniProtKB-SubCell"/>
</dbReference>
<dbReference type="GO" id="GO:0005524">
    <property type="term" value="F:ATP binding"/>
    <property type="evidence" value="ECO:0007669"/>
    <property type="project" value="UniProtKB-UniRule"/>
</dbReference>
<dbReference type="GO" id="GO:0004821">
    <property type="term" value="F:histidine-tRNA ligase activity"/>
    <property type="evidence" value="ECO:0007669"/>
    <property type="project" value="UniProtKB-UniRule"/>
</dbReference>
<dbReference type="GO" id="GO:0006427">
    <property type="term" value="P:histidyl-tRNA aminoacylation"/>
    <property type="evidence" value="ECO:0007669"/>
    <property type="project" value="UniProtKB-UniRule"/>
</dbReference>
<dbReference type="CDD" id="cd00773">
    <property type="entry name" value="HisRS-like_core"/>
    <property type="match status" value="1"/>
</dbReference>
<dbReference type="CDD" id="cd00859">
    <property type="entry name" value="HisRS_anticodon"/>
    <property type="match status" value="1"/>
</dbReference>
<dbReference type="FunFam" id="3.30.930.10:FF:000005">
    <property type="entry name" value="Histidine--tRNA ligase"/>
    <property type="match status" value="1"/>
</dbReference>
<dbReference type="FunFam" id="3.40.50.800:FF:000007">
    <property type="entry name" value="Histidine--tRNA ligase"/>
    <property type="match status" value="1"/>
</dbReference>
<dbReference type="Gene3D" id="3.40.50.800">
    <property type="entry name" value="Anticodon-binding domain"/>
    <property type="match status" value="1"/>
</dbReference>
<dbReference type="Gene3D" id="3.30.930.10">
    <property type="entry name" value="Bira Bifunctional Protein, Domain 2"/>
    <property type="match status" value="1"/>
</dbReference>
<dbReference type="HAMAP" id="MF_00127">
    <property type="entry name" value="His_tRNA_synth"/>
    <property type="match status" value="1"/>
</dbReference>
<dbReference type="InterPro" id="IPR006195">
    <property type="entry name" value="aa-tRNA-synth_II"/>
</dbReference>
<dbReference type="InterPro" id="IPR045864">
    <property type="entry name" value="aa-tRNA-synth_II/BPL/LPL"/>
</dbReference>
<dbReference type="InterPro" id="IPR004154">
    <property type="entry name" value="Anticodon-bd"/>
</dbReference>
<dbReference type="InterPro" id="IPR036621">
    <property type="entry name" value="Anticodon-bd_dom_sf"/>
</dbReference>
<dbReference type="InterPro" id="IPR015807">
    <property type="entry name" value="His-tRNA-ligase"/>
</dbReference>
<dbReference type="InterPro" id="IPR041715">
    <property type="entry name" value="HisRS-like_core"/>
</dbReference>
<dbReference type="InterPro" id="IPR004516">
    <property type="entry name" value="HisRS/HisZ"/>
</dbReference>
<dbReference type="InterPro" id="IPR033656">
    <property type="entry name" value="HisRS_anticodon"/>
</dbReference>
<dbReference type="NCBIfam" id="TIGR00442">
    <property type="entry name" value="hisS"/>
    <property type="match status" value="1"/>
</dbReference>
<dbReference type="PANTHER" id="PTHR43707:SF1">
    <property type="entry name" value="HISTIDINE--TRNA LIGASE, MITOCHONDRIAL-RELATED"/>
    <property type="match status" value="1"/>
</dbReference>
<dbReference type="PANTHER" id="PTHR43707">
    <property type="entry name" value="HISTIDYL-TRNA SYNTHETASE"/>
    <property type="match status" value="1"/>
</dbReference>
<dbReference type="Pfam" id="PF03129">
    <property type="entry name" value="HGTP_anticodon"/>
    <property type="match status" value="1"/>
</dbReference>
<dbReference type="Pfam" id="PF13393">
    <property type="entry name" value="tRNA-synt_His"/>
    <property type="match status" value="1"/>
</dbReference>
<dbReference type="PIRSF" id="PIRSF001549">
    <property type="entry name" value="His-tRNA_synth"/>
    <property type="match status" value="1"/>
</dbReference>
<dbReference type="SUPFAM" id="SSF52954">
    <property type="entry name" value="Class II aaRS ABD-related"/>
    <property type="match status" value="1"/>
</dbReference>
<dbReference type="SUPFAM" id="SSF55681">
    <property type="entry name" value="Class II aaRS and biotin synthetases"/>
    <property type="match status" value="1"/>
</dbReference>
<dbReference type="PROSITE" id="PS50862">
    <property type="entry name" value="AA_TRNA_LIGASE_II"/>
    <property type="match status" value="1"/>
</dbReference>